<name>NUOH_ALLAM</name>
<evidence type="ECO:0000255" key="1">
    <source>
        <dbReference type="HAMAP-Rule" id="MF_01350"/>
    </source>
</evidence>
<accession>B9JVF3</accession>
<feature type="chain" id="PRO_1000166616" description="NADH-quinone oxidoreductase subunit H">
    <location>
        <begin position="1"/>
        <end position="347"/>
    </location>
</feature>
<feature type="transmembrane region" description="Helical" evidence="1">
    <location>
        <begin position="14"/>
        <end position="34"/>
    </location>
</feature>
<feature type="transmembrane region" description="Helical" evidence="1">
    <location>
        <begin position="82"/>
        <end position="102"/>
    </location>
</feature>
<feature type="transmembrane region" description="Helical" evidence="1">
    <location>
        <begin position="115"/>
        <end position="135"/>
    </location>
</feature>
<feature type="transmembrane region" description="Helical" evidence="1">
    <location>
        <begin position="161"/>
        <end position="181"/>
    </location>
</feature>
<feature type="transmembrane region" description="Helical" evidence="1">
    <location>
        <begin position="198"/>
        <end position="218"/>
    </location>
</feature>
<feature type="transmembrane region" description="Helical" evidence="1">
    <location>
        <begin position="258"/>
        <end position="278"/>
    </location>
</feature>
<feature type="transmembrane region" description="Helical" evidence="1">
    <location>
        <begin position="285"/>
        <end position="305"/>
    </location>
</feature>
<feature type="transmembrane region" description="Helical" evidence="1">
    <location>
        <begin position="321"/>
        <end position="341"/>
    </location>
</feature>
<comment type="function">
    <text evidence="1">NDH-1 shuttles electrons from NADH, via FMN and iron-sulfur (Fe-S) centers, to quinones in the respiratory chain. The immediate electron acceptor for the enzyme in this species is believed to be ubiquinone. Couples the redox reaction to proton translocation (for every two electrons transferred, four hydrogen ions are translocated across the cytoplasmic membrane), and thus conserves the redox energy in a proton gradient. This subunit may bind ubiquinone.</text>
</comment>
<comment type="catalytic activity">
    <reaction evidence="1">
        <text>a quinone + NADH + 5 H(+)(in) = a quinol + NAD(+) + 4 H(+)(out)</text>
        <dbReference type="Rhea" id="RHEA:57888"/>
        <dbReference type="ChEBI" id="CHEBI:15378"/>
        <dbReference type="ChEBI" id="CHEBI:24646"/>
        <dbReference type="ChEBI" id="CHEBI:57540"/>
        <dbReference type="ChEBI" id="CHEBI:57945"/>
        <dbReference type="ChEBI" id="CHEBI:132124"/>
    </reaction>
</comment>
<comment type="subunit">
    <text evidence="1">NDH-1 is composed of 14 different subunits. Subunits NuoA, H, J, K, L, M, N constitute the membrane sector of the complex.</text>
</comment>
<comment type="subcellular location">
    <subcellularLocation>
        <location evidence="1">Cell inner membrane</location>
        <topology evidence="1">Multi-pass membrane protein</topology>
    </subcellularLocation>
</comment>
<comment type="similarity">
    <text evidence="1">Belongs to the complex I subunit 1 family.</text>
</comment>
<gene>
    <name evidence="1" type="primary">nuoH</name>
    <name type="ordered locus">Avi_1721</name>
</gene>
<sequence>MDSFVSTYVWPAAIMIGQSLLLLVCLLVFIAYILLADRKIWAAVQLRRGPNVVGPWGLFQSFADLLKFVFKEPIIPAGANKAVFLLAPLVAVTLALATWAVIPLNQGWVIANINVGILYVFAISSLEVYGIIMGGWASNSKYPFLGALRSAAQMVSYEVSIGFVIVTVLLCAGSLNLTDIVNSQNHGLGTMMGMPASLLDWHWLSLFPMFVIFFISALAETNRPPFDLPEAESELVAGFMVEYGSTPYMMFMLGEYAAIVLMCALTTILFLGGWLPPLDIAVLNWVPGIIWFILKATLVFFMFGITKAIVPRYRYDQLMRLGWKVFLPLSLAMVVIVAFVLKLGGWA</sequence>
<organism>
    <name type="scientific">Allorhizobium ampelinum (strain ATCC BAA-846 / DSM 112012 / S4)</name>
    <name type="common">Agrobacterium vitis (strain S4)</name>
    <dbReference type="NCBI Taxonomy" id="311402"/>
    <lineage>
        <taxon>Bacteria</taxon>
        <taxon>Pseudomonadati</taxon>
        <taxon>Pseudomonadota</taxon>
        <taxon>Alphaproteobacteria</taxon>
        <taxon>Hyphomicrobiales</taxon>
        <taxon>Rhizobiaceae</taxon>
        <taxon>Rhizobium/Agrobacterium group</taxon>
        <taxon>Allorhizobium</taxon>
        <taxon>Allorhizobium ampelinum</taxon>
    </lineage>
</organism>
<protein>
    <recommendedName>
        <fullName evidence="1">NADH-quinone oxidoreductase subunit H</fullName>
        <ecNumber evidence="1">7.1.1.-</ecNumber>
    </recommendedName>
    <alternativeName>
        <fullName evidence="1">NADH dehydrogenase I subunit H</fullName>
    </alternativeName>
    <alternativeName>
        <fullName evidence="1">NDH-1 subunit H</fullName>
    </alternativeName>
</protein>
<proteinExistence type="inferred from homology"/>
<keyword id="KW-0997">Cell inner membrane</keyword>
<keyword id="KW-1003">Cell membrane</keyword>
<keyword id="KW-0472">Membrane</keyword>
<keyword id="KW-0520">NAD</keyword>
<keyword id="KW-0874">Quinone</keyword>
<keyword id="KW-1185">Reference proteome</keyword>
<keyword id="KW-1278">Translocase</keyword>
<keyword id="KW-0812">Transmembrane</keyword>
<keyword id="KW-1133">Transmembrane helix</keyword>
<keyword id="KW-0830">Ubiquinone</keyword>
<reference key="1">
    <citation type="journal article" date="2009" name="J. Bacteriol.">
        <title>Genome sequences of three Agrobacterium biovars help elucidate the evolution of multichromosome genomes in bacteria.</title>
        <authorList>
            <person name="Slater S.C."/>
            <person name="Goldman B.S."/>
            <person name="Goodner B."/>
            <person name="Setubal J.C."/>
            <person name="Farrand S.K."/>
            <person name="Nester E.W."/>
            <person name="Burr T.J."/>
            <person name="Banta L."/>
            <person name="Dickerman A.W."/>
            <person name="Paulsen I."/>
            <person name="Otten L."/>
            <person name="Suen G."/>
            <person name="Welch R."/>
            <person name="Almeida N.F."/>
            <person name="Arnold F."/>
            <person name="Burton O.T."/>
            <person name="Du Z."/>
            <person name="Ewing A."/>
            <person name="Godsy E."/>
            <person name="Heisel S."/>
            <person name="Houmiel K.L."/>
            <person name="Jhaveri J."/>
            <person name="Lu J."/>
            <person name="Miller N.M."/>
            <person name="Norton S."/>
            <person name="Chen Q."/>
            <person name="Phoolcharoen W."/>
            <person name="Ohlin V."/>
            <person name="Ondrusek D."/>
            <person name="Pride N."/>
            <person name="Stricklin S.L."/>
            <person name="Sun J."/>
            <person name="Wheeler C."/>
            <person name="Wilson L."/>
            <person name="Zhu H."/>
            <person name="Wood D.W."/>
        </authorList>
    </citation>
    <scope>NUCLEOTIDE SEQUENCE [LARGE SCALE GENOMIC DNA]</scope>
    <source>
        <strain>ATCC BAA-846 / DSM 112012 / S4</strain>
    </source>
</reference>
<dbReference type="EC" id="7.1.1.-" evidence="1"/>
<dbReference type="EMBL" id="CP000633">
    <property type="protein sequence ID" value="ACM36233.1"/>
    <property type="molecule type" value="Genomic_DNA"/>
</dbReference>
<dbReference type="RefSeq" id="WP_015915656.1">
    <property type="nucleotide sequence ID" value="NC_011989.1"/>
</dbReference>
<dbReference type="SMR" id="B9JVF3"/>
<dbReference type="STRING" id="311402.Avi_1721"/>
<dbReference type="KEGG" id="avi:Avi_1721"/>
<dbReference type="eggNOG" id="COG1005">
    <property type="taxonomic scope" value="Bacteria"/>
</dbReference>
<dbReference type="HOGENOM" id="CLU_015134_0_1_5"/>
<dbReference type="Proteomes" id="UP000001596">
    <property type="component" value="Chromosome 1"/>
</dbReference>
<dbReference type="GO" id="GO:0005886">
    <property type="term" value="C:plasma membrane"/>
    <property type="evidence" value="ECO:0007669"/>
    <property type="project" value="UniProtKB-SubCell"/>
</dbReference>
<dbReference type="GO" id="GO:0003954">
    <property type="term" value="F:NADH dehydrogenase activity"/>
    <property type="evidence" value="ECO:0007669"/>
    <property type="project" value="TreeGrafter"/>
</dbReference>
<dbReference type="GO" id="GO:0016655">
    <property type="term" value="F:oxidoreductase activity, acting on NAD(P)H, quinone or similar compound as acceptor"/>
    <property type="evidence" value="ECO:0007669"/>
    <property type="project" value="UniProtKB-UniRule"/>
</dbReference>
<dbReference type="GO" id="GO:0048038">
    <property type="term" value="F:quinone binding"/>
    <property type="evidence" value="ECO:0007669"/>
    <property type="project" value="UniProtKB-KW"/>
</dbReference>
<dbReference type="GO" id="GO:0009060">
    <property type="term" value="P:aerobic respiration"/>
    <property type="evidence" value="ECO:0007669"/>
    <property type="project" value="TreeGrafter"/>
</dbReference>
<dbReference type="HAMAP" id="MF_01350">
    <property type="entry name" value="NDH1_NuoH"/>
    <property type="match status" value="1"/>
</dbReference>
<dbReference type="InterPro" id="IPR001694">
    <property type="entry name" value="NADH_UbQ_OxRdtase_su1/FPO"/>
</dbReference>
<dbReference type="InterPro" id="IPR018086">
    <property type="entry name" value="NADH_UbQ_OxRdtase_su1_CS"/>
</dbReference>
<dbReference type="NCBIfam" id="NF004741">
    <property type="entry name" value="PRK06076.1-2"/>
    <property type="match status" value="1"/>
</dbReference>
<dbReference type="NCBIfam" id="NF004745">
    <property type="entry name" value="PRK06076.1-6"/>
    <property type="match status" value="1"/>
</dbReference>
<dbReference type="PANTHER" id="PTHR11432">
    <property type="entry name" value="NADH DEHYDROGENASE SUBUNIT 1"/>
    <property type="match status" value="1"/>
</dbReference>
<dbReference type="PANTHER" id="PTHR11432:SF3">
    <property type="entry name" value="NADH-UBIQUINONE OXIDOREDUCTASE CHAIN 1"/>
    <property type="match status" value="1"/>
</dbReference>
<dbReference type="Pfam" id="PF00146">
    <property type="entry name" value="NADHdh"/>
    <property type="match status" value="1"/>
</dbReference>
<dbReference type="PROSITE" id="PS00668">
    <property type="entry name" value="COMPLEX1_ND1_2"/>
    <property type="match status" value="1"/>
</dbReference>